<organism>
    <name type="scientific">Caulobacter sp. (strain K31)</name>
    <dbReference type="NCBI Taxonomy" id="366602"/>
    <lineage>
        <taxon>Bacteria</taxon>
        <taxon>Pseudomonadati</taxon>
        <taxon>Pseudomonadota</taxon>
        <taxon>Alphaproteobacteria</taxon>
        <taxon>Caulobacterales</taxon>
        <taxon>Caulobacteraceae</taxon>
        <taxon>Caulobacter</taxon>
    </lineage>
</organism>
<comment type="function">
    <text evidence="1">DNA-dependent RNA polymerase catalyzes the transcription of DNA into RNA using the four ribonucleoside triphosphates as substrates.</text>
</comment>
<comment type="catalytic activity">
    <reaction evidence="1">
        <text>RNA(n) + a ribonucleoside 5'-triphosphate = RNA(n+1) + diphosphate</text>
        <dbReference type="Rhea" id="RHEA:21248"/>
        <dbReference type="Rhea" id="RHEA-COMP:14527"/>
        <dbReference type="Rhea" id="RHEA-COMP:17342"/>
        <dbReference type="ChEBI" id="CHEBI:33019"/>
        <dbReference type="ChEBI" id="CHEBI:61557"/>
        <dbReference type="ChEBI" id="CHEBI:140395"/>
        <dbReference type="EC" id="2.7.7.6"/>
    </reaction>
</comment>
<comment type="cofactor">
    <cofactor evidence="1">
        <name>Mg(2+)</name>
        <dbReference type="ChEBI" id="CHEBI:18420"/>
    </cofactor>
    <text evidence="1">Binds 1 Mg(2+) ion per subunit.</text>
</comment>
<comment type="cofactor">
    <cofactor evidence="1">
        <name>Zn(2+)</name>
        <dbReference type="ChEBI" id="CHEBI:29105"/>
    </cofactor>
    <text evidence="1">Binds 2 Zn(2+) ions per subunit.</text>
</comment>
<comment type="subunit">
    <text evidence="1">The RNAP catalytic core consists of 2 alpha, 1 beta, 1 beta' and 1 omega subunit. When a sigma factor is associated with the core the holoenzyme is formed, which can initiate transcription.</text>
</comment>
<comment type="similarity">
    <text evidence="1">Belongs to the RNA polymerase beta' chain family.</text>
</comment>
<keyword id="KW-0240">DNA-directed RNA polymerase</keyword>
<keyword id="KW-0460">Magnesium</keyword>
<keyword id="KW-0479">Metal-binding</keyword>
<keyword id="KW-0548">Nucleotidyltransferase</keyword>
<keyword id="KW-0804">Transcription</keyword>
<keyword id="KW-0808">Transferase</keyword>
<keyword id="KW-0862">Zinc</keyword>
<accession>B0SUP8</accession>
<name>RPOC_CAUSK</name>
<sequence length="1394" mass="154040">MNQEVLNIFNPVQAAPTFDQIRISLASPEKIRSWSFGEIKKPETINYRTFKPERDGLFCARIFGPTKDYECLCGKYKRMKYKGIICEKCGVEVTLARVRRERMGHIELASPVAHIWFLKSLPSRIAMMLDMPLKDIERVLYFEYYIVTEPGLTPLKQHQLLSEDDFMRAQDEYGDDSFTAEIGAEAIQNLLKAIDLDKEAERLREELAGTVSDMKQKKFSKRLKILEAFSESGNRPEWMVLTVVPVIPPELRPLVPLDGGRFATSDLNDLYRRVINRNNRLKRLIELRAPDIIIRNEKRMLQESVDALFDNGRRGRVITGANKRPLKSLADMLKGKQGRFRQNLLGKRVDYSGRSVIVVGPDLKLHECGLPKKMALELFKPFIYARLDAKGLSGTVKQSKRMVEREQPQVWDILEEVIREHPVMLNRAPTLHRLGIQAFEPKLIEGKAIQLHPLVCAAFNADFDGDQMAVHVPLSLEAQLEARVLMMSTNNILSPANGRPIIVPSQDIVLGLYYLSVAREGEPGEGKIFADLGEIEAAMDAGVVSLHAKIKSRFTEMDADGVVRRRVIDTTPGRMKIAALLPQHTAIGHRLIEKALTKKEIGNLIDVVYRHCGQKATVIFADQIMGLGFKEAAKAGISFGKDDIIIPKRKEAIVAETRTLAEEYEQQYADGLITKGEKYNKVVDAWAKATDRVADEMMAELQMKHKDENGREKEINAIYMMAHSGARGSQAQMKQLGGMRGLMAKPSGEIIETPIVSNFKEGLTVQEYFNSTHGARKGLADTALKTANSGYLTRRLVDVAQDCIIVEEDCGTTRGITLRAVVEGGDVLVSLGARVLGRFSAEDIKDPATGEIVVPADTYLTENMADLIEAAAVQSVKVRSVLTCEAKIGVCGACYGRDLARGTPVNIGEAVGVIAAQSIGEPGTQLTMRTFHIGGTAQVAEQSFFESSNDGTVRVTGATVVGTDGFLVVMSRNTAVSVLVDGKERENYKPPYGARLKIKDGDKVKRGQRLADWDPYTTPIITEVAGKIRAEDLVDGFSVREETDEATGIAQRVIADWRTSARASDLRPAMGVLAEDGSYVRLANGGEARYLMSVGAILSVGDGDMVKPGEVIARIPTEGAKTRDITGGLPRVAELFEARRPKDCAVIAEMDGRVEFGKDYKNKRRIKITPEVDADGNQGEPVEFLIPKGKHIAVHDGDFIARGEYIIDGNPDPHDILRILGVEALANFLVDEIQEVYRLQGVPINDKHIETIVRQMLQKVEILEPGDTGLIKGDHLDKPEFYVEQDRAVARGGRPATTQPVLLGITKASLQTKSFISAASFQETTRVLTEASVHGKTDTLEGLKENVIVGRLIPAGTGSYLRSLQRVAAKRDEQLAQQREDAMEPLPAVIAEEA</sequence>
<evidence type="ECO:0000255" key="1">
    <source>
        <dbReference type="HAMAP-Rule" id="MF_01322"/>
    </source>
</evidence>
<gene>
    <name evidence="1" type="primary">rpoC</name>
    <name type="ordered locus">Caul_0795</name>
</gene>
<dbReference type="EC" id="2.7.7.6" evidence="1"/>
<dbReference type="EMBL" id="CP000927">
    <property type="protein sequence ID" value="ABZ69926.1"/>
    <property type="molecule type" value="Genomic_DNA"/>
</dbReference>
<dbReference type="SMR" id="B0SUP8"/>
<dbReference type="STRING" id="366602.Caul_0795"/>
<dbReference type="KEGG" id="cak:Caul_0795"/>
<dbReference type="eggNOG" id="COG0086">
    <property type="taxonomic scope" value="Bacteria"/>
</dbReference>
<dbReference type="HOGENOM" id="CLU_000524_3_1_5"/>
<dbReference type="OrthoDB" id="9815296at2"/>
<dbReference type="GO" id="GO:0000428">
    <property type="term" value="C:DNA-directed RNA polymerase complex"/>
    <property type="evidence" value="ECO:0007669"/>
    <property type="project" value="UniProtKB-KW"/>
</dbReference>
<dbReference type="GO" id="GO:0003677">
    <property type="term" value="F:DNA binding"/>
    <property type="evidence" value="ECO:0007669"/>
    <property type="project" value="UniProtKB-UniRule"/>
</dbReference>
<dbReference type="GO" id="GO:0003899">
    <property type="term" value="F:DNA-directed RNA polymerase activity"/>
    <property type="evidence" value="ECO:0007669"/>
    <property type="project" value="UniProtKB-UniRule"/>
</dbReference>
<dbReference type="GO" id="GO:0000287">
    <property type="term" value="F:magnesium ion binding"/>
    <property type="evidence" value="ECO:0007669"/>
    <property type="project" value="UniProtKB-UniRule"/>
</dbReference>
<dbReference type="GO" id="GO:0008270">
    <property type="term" value="F:zinc ion binding"/>
    <property type="evidence" value="ECO:0007669"/>
    <property type="project" value="UniProtKB-UniRule"/>
</dbReference>
<dbReference type="GO" id="GO:0006351">
    <property type="term" value="P:DNA-templated transcription"/>
    <property type="evidence" value="ECO:0007669"/>
    <property type="project" value="UniProtKB-UniRule"/>
</dbReference>
<dbReference type="CDD" id="cd02655">
    <property type="entry name" value="RNAP_beta'_C"/>
    <property type="match status" value="1"/>
</dbReference>
<dbReference type="CDD" id="cd01609">
    <property type="entry name" value="RNAP_beta'_N"/>
    <property type="match status" value="1"/>
</dbReference>
<dbReference type="FunFam" id="4.10.860.120:FF:000001">
    <property type="entry name" value="DNA-directed RNA polymerase subunit beta"/>
    <property type="match status" value="1"/>
</dbReference>
<dbReference type="Gene3D" id="1.10.132.30">
    <property type="match status" value="1"/>
</dbReference>
<dbReference type="Gene3D" id="1.10.150.390">
    <property type="match status" value="1"/>
</dbReference>
<dbReference type="Gene3D" id="1.10.1790.20">
    <property type="match status" value="1"/>
</dbReference>
<dbReference type="Gene3D" id="1.10.40.90">
    <property type="match status" value="1"/>
</dbReference>
<dbReference type="Gene3D" id="2.40.40.20">
    <property type="match status" value="1"/>
</dbReference>
<dbReference type="Gene3D" id="2.40.50.100">
    <property type="match status" value="3"/>
</dbReference>
<dbReference type="Gene3D" id="4.10.860.120">
    <property type="entry name" value="RNA polymerase II, clamp domain"/>
    <property type="match status" value="1"/>
</dbReference>
<dbReference type="Gene3D" id="1.10.274.100">
    <property type="entry name" value="RNA polymerase Rpb1, domain 3"/>
    <property type="match status" value="2"/>
</dbReference>
<dbReference type="HAMAP" id="MF_01322">
    <property type="entry name" value="RNApol_bact_RpoC"/>
    <property type="match status" value="1"/>
</dbReference>
<dbReference type="InterPro" id="IPR045867">
    <property type="entry name" value="DNA-dir_RpoC_beta_prime"/>
</dbReference>
<dbReference type="InterPro" id="IPR012754">
    <property type="entry name" value="DNA-dir_RpoC_beta_prime_bact"/>
</dbReference>
<dbReference type="InterPro" id="IPR000722">
    <property type="entry name" value="RNA_pol_asu"/>
</dbReference>
<dbReference type="InterPro" id="IPR006592">
    <property type="entry name" value="RNA_pol_N"/>
</dbReference>
<dbReference type="InterPro" id="IPR007080">
    <property type="entry name" value="RNA_pol_Rpb1_1"/>
</dbReference>
<dbReference type="InterPro" id="IPR007066">
    <property type="entry name" value="RNA_pol_Rpb1_3"/>
</dbReference>
<dbReference type="InterPro" id="IPR042102">
    <property type="entry name" value="RNA_pol_Rpb1_3_sf"/>
</dbReference>
<dbReference type="InterPro" id="IPR007083">
    <property type="entry name" value="RNA_pol_Rpb1_4"/>
</dbReference>
<dbReference type="InterPro" id="IPR007081">
    <property type="entry name" value="RNA_pol_Rpb1_5"/>
</dbReference>
<dbReference type="InterPro" id="IPR044893">
    <property type="entry name" value="RNA_pol_Rpb1_clamp_domain"/>
</dbReference>
<dbReference type="InterPro" id="IPR038120">
    <property type="entry name" value="Rpb1_funnel_sf"/>
</dbReference>
<dbReference type="NCBIfam" id="TIGR02386">
    <property type="entry name" value="rpoC_TIGR"/>
    <property type="match status" value="1"/>
</dbReference>
<dbReference type="PANTHER" id="PTHR19376">
    <property type="entry name" value="DNA-DIRECTED RNA POLYMERASE"/>
    <property type="match status" value="1"/>
</dbReference>
<dbReference type="PANTHER" id="PTHR19376:SF54">
    <property type="entry name" value="DNA-DIRECTED RNA POLYMERASE SUBUNIT BETA"/>
    <property type="match status" value="1"/>
</dbReference>
<dbReference type="Pfam" id="PF04997">
    <property type="entry name" value="RNA_pol_Rpb1_1"/>
    <property type="match status" value="1"/>
</dbReference>
<dbReference type="Pfam" id="PF00623">
    <property type="entry name" value="RNA_pol_Rpb1_2"/>
    <property type="match status" value="2"/>
</dbReference>
<dbReference type="Pfam" id="PF04983">
    <property type="entry name" value="RNA_pol_Rpb1_3"/>
    <property type="match status" value="1"/>
</dbReference>
<dbReference type="Pfam" id="PF05000">
    <property type="entry name" value="RNA_pol_Rpb1_4"/>
    <property type="match status" value="1"/>
</dbReference>
<dbReference type="Pfam" id="PF04998">
    <property type="entry name" value="RNA_pol_Rpb1_5"/>
    <property type="match status" value="1"/>
</dbReference>
<dbReference type="SMART" id="SM00663">
    <property type="entry name" value="RPOLA_N"/>
    <property type="match status" value="1"/>
</dbReference>
<dbReference type="SUPFAM" id="SSF64484">
    <property type="entry name" value="beta and beta-prime subunits of DNA dependent RNA-polymerase"/>
    <property type="match status" value="1"/>
</dbReference>
<protein>
    <recommendedName>
        <fullName evidence="1">DNA-directed RNA polymerase subunit beta'</fullName>
        <shortName evidence="1">RNAP subunit beta'</shortName>
        <ecNumber evidence="1">2.7.7.6</ecNumber>
    </recommendedName>
    <alternativeName>
        <fullName evidence="1">RNA polymerase subunit beta'</fullName>
    </alternativeName>
    <alternativeName>
        <fullName evidence="1">Transcriptase subunit beta'</fullName>
    </alternativeName>
</protein>
<reference key="1">
    <citation type="submission" date="2008-01" db="EMBL/GenBank/DDBJ databases">
        <title>Complete sequence of chromosome of Caulobacter sp. K31.</title>
        <authorList>
            <consortium name="US DOE Joint Genome Institute"/>
            <person name="Copeland A."/>
            <person name="Lucas S."/>
            <person name="Lapidus A."/>
            <person name="Barry K."/>
            <person name="Glavina del Rio T."/>
            <person name="Dalin E."/>
            <person name="Tice H."/>
            <person name="Pitluck S."/>
            <person name="Bruce D."/>
            <person name="Goodwin L."/>
            <person name="Thompson L.S."/>
            <person name="Brettin T."/>
            <person name="Detter J.C."/>
            <person name="Han C."/>
            <person name="Schmutz J."/>
            <person name="Larimer F."/>
            <person name="Land M."/>
            <person name="Hauser L."/>
            <person name="Kyrpides N."/>
            <person name="Kim E."/>
            <person name="Stephens C."/>
            <person name="Richardson P."/>
        </authorList>
    </citation>
    <scope>NUCLEOTIDE SEQUENCE [LARGE SCALE GENOMIC DNA]</scope>
    <source>
        <strain>K31</strain>
    </source>
</reference>
<feature type="chain" id="PRO_0000353320" description="DNA-directed RNA polymerase subunit beta'">
    <location>
        <begin position="1"/>
        <end position="1394"/>
    </location>
</feature>
<feature type="binding site" evidence="1">
    <location>
        <position position="71"/>
    </location>
    <ligand>
        <name>Zn(2+)</name>
        <dbReference type="ChEBI" id="CHEBI:29105"/>
        <label>1</label>
    </ligand>
</feature>
<feature type="binding site" evidence="1">
    <location>
        <position position="73"/>
    </location>
    <ligand>
        <name>Zn(2+)</name>
        <dbReference type="ChEBI" id="CHEBI:29105"/>
        <label>1</label>
    </ligand>
</feature>
<feature type="binding site" evidence="1">
    <location>
        <position position="86"/>
    </location>
    <ligand>
        <name>Zn(2+)</name>
        <dbReference type="ChEBI" id="CHEBI:29105"/>
        <label>1</label>
    </ligand>
</feature>
<feature type="binding site" evidence="1">
    <location>
        <position position="89"/>
    </location>
    <ligand>
        <name>Zn(2+)</name>
        <dbReference type="ChEBI" id="CHEBI:29105"/>
        <label>1</label>
    </ligand>
</feature>
<feature type="binding site" evidence="1">
    <location>
        <position position="462"/>
    </location>
    <ligand>
        <name>Mg(2+)</name>
        <dbReference type="ChEBI" id="CHEBI:18420"/>
    </ligand>
</feature>
<feature type="binding site" evidence="1">
    <location>
        <position position="464"/>
    </location>
    <ligand>
        <name>Mg(2+)</name>
        <dbReference type="ChEBI" id="CHEBI:18420"/>
    </ligand>
</feature>
<feature type="binding site" evidence="1">
    <location>
        <position position="466"/>
    </location>
    <ligand>
        <name>Mg(2+)</name>
        <dbReference type="ChEBI" id="CHEBI:18420"/>
    </ligand>
</feature>
<feature type="binding site" evidence="1">
    <location>
        <position position="810"/>
    </location>
    <ligand>
        <name>Zn(2+)</name>
        <dbReference type="ChEBI" id="CHEBI:29105"/>
        <label>2</label>
    </ligand>
</feature>
<feature type="binding site" evidence="1">
    <location>
        <position position="884"/>
    </location>
    <ligand>
        <name>Zn(2+)</name>
        <dbReference type="ChEBI" id="CHEBI:29105"/>
        <label>2</label>
    </ligand>
</feature>
<feature type="binding site" evidence="1">
    <location>
        <position position="891"/>
    </location>
    <ligand>
        <name>Zn(2+)</name>
        <dbReference type="ChEBI" id="CHEBI:29105"/>
        <label>2</label>
    </ligand>
</feature>
<feature type="binding site" evidence="1">
    <location>
        <position position="894"/>
    </location>
    <ligand>
        <name>Zn(2+)</name>
        <dbReference type="ChEBI" id="CHEBI:29105"/>
        <label>2</label>
    </ligand>
</feature>
<proteinExistence type="inferred from homology"/>